<protein>
    <recommendedName>
        <fullName evidence="1">Bifunctional protein PyrR</fullName>
    </recommendedName>
    <domain>
        <recommendedName>
            <fullName evidence="1">Pyrimidine operon regulatory protein</fullName>
        </recommendedName>
    </domain>
    <domain>
        <recommendedName>
            <fullName evidence="1">Uracil phosphoribosyltransferase</fullName>
            <shortName evidence="1">UPRTase</shortName>
            <ecNumber evidence="1">2.4.2.9</ecNumber>
        </recommendedName>
    </domain>
</protein>
<name>PYRR_BACC0</name>
<comment type="function">
    <text evidence="1">Regulates transcriptional attenuation of the pyrimidine nucleotide (pyr) operon by binding in a uridine-dependent manner to specific sites on pyr mRNA. This disrupts an antiterminator hairpin in the RNA and favors formation of a downstream transcription terminator, leading to a reduced expression of downstream genes.</text>
</comment>
<comment type="function">
    <text evidence="1">Also displays a weak uracil phosphoribosyltransferase activity which is not physiologically significant.</text>
</comment>
<comment type="catalytic activity">
    <reaction evidence="1">
        <text>UMP + diphosphate = 5-phospho-alpha-D-ribose 1-diphosphate + uracil</text>
        <dbReference type="Rhea" id="RHEA:13017"/>
        <dbReference type="ChEBI" id="CHEBI:17568"/>
        <dbReference type="ChEBI" id="CHEBI:33019"/>
        <dbReference type="ChEBI" id="CHEBI:57865"/>
        <dbReference type="ChEBI" id="CHEBI:58017"/>
        <dbReference type="EC" id="2.4.2.9"/>
    </reaction>
</comment>
<comment type="subunit">
    <text evidence="1">Homodimer and homohexamer; in equilibrium.</text>
</comment>
<comment type="similarity">
    <text evidence="1">Belongs to the purine/pyrimidine phosphoribosyltransferase family. PyrR subfamily.</text>
</comment>
<proteinExistence type="inferred from homology"/>
<reference key="1">
    <citation type="submission" date="2008-10" db="EMBL/GenBank/DDBJ databases">
        <title>Genome sequence of Bacillus cereus AH820.</title>
        <authorList>
            <person name="Dodson R.J."/>
            <person name="Durkin A.S."/>
            <person name="Rosovitz M.J."/>
            <person name="Rasko D.A."/>
            <person name="Hoffmaster A."/>
            <person name="Ravel J."/>
            <person name="Sutton G."/>
        </authorList>
    </citation>
    <scope>NUCLEOTIDE SEQUENCE [LARGE SCALE GENOMIC DNA]</scope>
    <source>
        <strain>AH820</strain>
    </source>
</reference>
<sequence length="180" mass="20391">MQEKAVVLDDQMIRRALTRISHEIVERNKGVDNCVLVGIKTRGIFIAQRLAERIGQIEGKEIEVGELDITLYRDDLTLQSKNKEPLVKGSDIPVDITKKKVILVDDVLYTGRTVRAAMDALMDLGRPSQIQLAVLVDRGHRELPIRADYVGKNIPTSSEERIEVDLQETDQQDRVSIYDK</sequence>
<gene>
    <name evidence="1" type="primary">pyrR</name>
    <name type="ordered locus">BCAH820_3905</name>
</gene>
<accession>B7JJX8</accession>
<dbReference type="EC" id="2.4.2.9" evidence="1"/>
<dbReference type="EMBL" id="CP001283">
    <property type="protein sequence ID" value="ACK88842.1"/>
    <property type="molecule type" value="Genomic_DNA"/>
</dbReference>
<dbReference type="RefSeq" id="WP_001156487.1">
    <property type="nucleotide sequence ID" value="NC_011773.1"/>
</dbReference>
<dbReference type="SMR" id="B7JJX8"/>
<dbReference type="GeneID" id="69530750"/>
<dbReference type="KEGG" id="bcu:BCAH820_3905"/>
<dbReference type="HOGENOM" id="CLU_094234_2_1_9"/>
<dbReference type="Proteomes" id="UP000001363">
    <property type="component" value="Chromosome"/>
</dbReference>
<dbReference type="GO" id="GO:0003723">
    <property type="term" value="F:RNA binding"/>
    <property type="evidence" value="ECO:0007669"/>
    <property type="project" value="UniProtKB-UniRule"/>
</dbReference>
<dbReference type="GO" id="GO:0004845">
    <property type="term" value="F:uracil phosphoribosyltransferase activity"/>
    <property type="evidence" value="ECO:0007669"/>
    <property type="project" value="UniProtKB-UniRule"/>
</dbReference>
<dbReference type="GO" id="GO:0006353">
    <property type="term" value="P:DNA-templated transcription termination"/>
    <property type="evidence" value="ECO:0007669"/>
    <property type="project" value="UniProtKB-UniRule"/>
</dbReference>
<dbReference type="CDD" id="cd06223">
    <property type="entry name" value="PRTases_typeI"/>
    <property type="match status" value="1"/>
</dbReference>
<dbReference type="FunFam" id="3.40.50.2020:FF:000020">
    <property type="entry name" value="Bifunctional protein PyrR"/>
    <property type="match status" value="1"/>
</dbReference>
<dbReference type="Gene3D" id="3.40.50.2020">
    <property type="match status" value="1"/>
</dbReference>
<dbReference type="HAMAP" id="MF_01219">
    <property type="entry name" value="PyrR"/>
    <property type="match status" value="1"/>
</dbReference>
<dbReference type="InterPro" id="IPR000836">
    <property type="entry name" value="PRibTrfase_dom"/>
</dbReference>
<dbReference type="InterPro" id="IPR029057">
    <property type="entry name" value="PRTase-like"/>
</dbReference>
<dbReference type="InterPro" id="IPR023050">
    <property type="entry name" value="PyrR"/>
</dbReference>
<dbReference type="InterPro" id="IPR050137">
    <property type="entry name" value="PyrR_bifunctional"/>
</dbReference>
<dbReference type="NCBIfam" id="NF003545">
    <property type="entry name" value="PRK05205.1-1"/>
    <property type="match status" value="1"/>
</dbReference>
<dbReference type="NCBIfam" id="NF003547">
    <property type="entry name" value="PRK05205.1-3"/>
    <property type="match status" value="1"/>
</dbReference>
<dbReference type="NCBIfam" id="NF003548">
    <property type="entry name" value="PRK05205.1-4"/>
    <property type="match status" value="1"/>
</dbReference>
<dbReference type="NCBIfam" id="NF003549">
    <property type="entry name" value="PRK05205.1-5"/>
    <property type="match status" value="1"/>
</dbReference>
<dbReference type="PANTHER" id="PTHR11608">
    <property type="entry name" value="BIFUNCTIONAL PROTEIN PYRR"/>
    <property type="match status" value="1"/>
</dbReference>
<dbReference type="PANTHER" id="PTHR11608:SF0">
    <property type="entry name" value="BIFUNCTIONAL PROTEIN PYRR"/>
    <property type="match status" value="1"/>
</dbReference>
<dbReference type="Pfam" id="PF00156">
    <property type="entry name" value="Pribosyltran"/>
    <property type="match status" value="1"/>
</dbReference>
<dbReference type="SUPFAM" id="SSF53271">
    <property type="entry name" value="PRTase-like"/>
    <property type="match status" value="1"/>
</dbReference>
<evidence type="ECO:0000255" key="1">
    <source>
        <dbReference type="HAMAP-Rule" id="MF_01219"/>
    </source>
</evidence>
<organism>
    <name type="scientific">Bacillus cereus (strain AH820)</name>
    <dbReference type="NCBI Taxonomy" id="405535"/>
    <lineage>
        <taxon>Bacteria</taxon>
        <taxon>Bacillati</taxon>
        <taxon>Bacillota</taxon>
        <taxon>Bacilli</taxon>
        <taxon>Bacillales</taxon>
        <taxon>Bacillaceae</taxon>
        <taxon>Bacillus</taxon>
        <taxon>Bacillus cereus group</taxon>
    </lineage>
</organism>
<feature type="chain" id="PRO_1000139184" description="Bifunctional protein PyrR">
    <location>
        <begin position="1"/>
        <end position="180"/>
    </location>
</feature>
<feature type="short sequence motif" description="PRPP-binding" evidence="1">
    <location>
        <begin position="101"/>
        <end position="113"/>
    </location>
</feature>
<keyword id="KW-0328">Glycosyltransferase</keyword>
<keyword id="KW-0694">RNA-binding</keyword>
<keyword id="KW-0804">Transcription</keyword>
<keyword id="KW-0805">Transcription regulation</keyword>
<keyword id="KW-0806">Transcription termination</keyword>
<keyword id="KW-0808">Transferase</keyword>